<sequence length="1186" mass="124511">MSRGAGALQRRTTTYLISLTLVKLESVPPPPPSPSAAAAGAPGARGSEPRDPGSPRGSEEPGKKRHERLFHRQDALWISTSSAGTGGAEPPALSPAPASPARPVSPAPGRRLSLWAAPPGPPLSGGLSPDSKPGGAPSSSRRPLLSSPSWGGPEPEGRTGGGVPGSSSPHPGTGSRRLKVAPPPPAPKPFKTVTTSGAKAGGGKGAGSRLSWPESEGKPRVKGSKSTAGTGASAAAAGGGGSAAVTTSGGVGAGAGTRGKLSPRKGKSKTLDNSDLHPGPSAGSPPLTVPAIPVPATSVTATSTQPLGPAPPITLEPPAPGLKRGREGGRASTRDRKMLKFISGIFTKSTGGPPGPGPLPGPQGLSSSSGSRELLGAELRTSPKAVVNSQEWTLSRSIPELRLGVLGDVRSGKSSLIHRFLTGSYQVLEKIESEQYKKEMLVDGQTHLVLIREEAGAPDAKFSGWADAVIFVFSLEDESSFQAVSRLHGQLSSLRGEGRGGLALALVGTQDRISASSPRVVGDARARALCTDMKRCSYYETCATYGLNVDRVFQEVAQKVVTLRKQQQLLAACKSLPSSPSHSAASTPVAGQASNGGHTSDYSSSLPSSPNVGHRELRAEAAAVAGLSTPGSLHRAAKRRTSLFANRRGSDAEKRSLDSRGETTGSGRAIPIKQSFLLKRSGNSLNKEWKKKYVTLSSNGFLLYHPSINDYIHSTHGKEMDLLRTTVKVPGKRPPRAISAFGPSASINGLVKDMSTVQMGEGPEASTPMPSPSPSPSSLQLPTDQTSKHLLKPDRNLARALSTDCTPSGDLSPLSREPPPSPMVKKQRRKKLSTPSKTEGSAVQAEAKRKMWKLKSFGSLRNIYKAEENFEFLIVSSTGQTWHFEAASFEERDAWVQAIESQILASLQCCESSKVKLRTDSQSEAVAIQAIRNAKGNSTCVDCGAPNPTWASLNLGALICIECSGIHRNLGTHLSRVRSLDLDDWPRELTLVLTAIGNDTANRVWESDTRGRAKPTRDSSREERESWIRAKYEQLLFLAPLGTTEEPLGRQLWAAVEAQDVAAVLLLLAHARHGPLDTSVEDPQLRSPLHLAAELAHVVITQLLLWYGADVAARDAQGRTALFYARQAGSQLCADILLQHGCPGEGGSTATTPSAATTPSITATPSPRRRSSAASLGRVDTTIALV</sequence>
<name>AGAP2_MOUSE</name>
<evidence type="ECO:0000250" key="1"/>
<evidence type="ECO:0000250" key="2">
    <source>
        <dbReference type="UniProtKB" id="Q8CGU4"/>
    </source>
</evidence>
<evidence type="ECO:0000255" key="3"/>
<evidence type="ECO:0000255" key="4">
    <source>
        <dbReference type="PROSITE-ProRule" id="PRU00145"/>
    </source>
</evidence>
<evidence type="ECO:0000255" key="5">
    <source>
        <dbReference type="PROSITE-ProRule" id="PRU00288"/>
    </source>
</evidence>
<evidence type="ECO:0000255" key="6">
    <source>
        <dbReference type="PROSITE-ProRule" id="PRU01402"/>
    </source>
</evidence>
<evidence type="ECO:0000256" key="7">
    <source>
        <dbReference type="SAM" id="MobiDB-lite"/>
    </source>
</evidence>
<evidence type="ECO:0000303" key="8">
    <source ref="2"/>
</evidence>
<evidence type="ECO:0000305" key="9"/>
<evidence type="ECO:0007744" key="10">
    <source>
    </source>
</evidence>
<dbReference type="EMBL" id="AK147446">
    <property type="protein sequence ID" value="BAE27918.1"/>
    <property type="molecule type" value="mRNA"/>
</dbReference>
<dbReference type="EMBL" id="AK220325">
    <property type="protein sequence ID" value="BAD90236.1"/>
    <property type="molecule type" value="mRNA"/>
</dbReference>
<dbReference type="CCDS" id="CCDS24228.1">
    <molecule id="Q3UHD9-1"/>
</dbReference>
<dbReference type="CCDS" id="CCDS88097.1">
    <molecule id="Q3UHD9-2"/>
</dbReference>
<dbReference type="RefSeq" id="NP_001028435.1">
    <molecule id="Q3UHD9-1"/>
    <property type="nucleotide sequence ID" value="NM_001033263.5"/>
</dbReference>
<dbReference type="RefSeq" id="NP_001287943.1">
    <molecule id="Q3UHD9-2"/>
    <property type="nucleotide sequence ID" value="NM_001301014.1"/>
</dbReference>
<dbReference type="SMR" id="Q3UHD9"/>
<dbReference type="BioGRID" id="229744">
    <property type="interactions" value="196"/>
</dbReference>
<dbReference type="FunCoup" id="Q3UHD9">
    <property type="interactions" value="792"/>
</dbReference>
<dbReference type="IntAct" id="Q3UHD9">
    <property type="interactions" value="198"/>
</dbReference>
<dbReference type="MINT" id="Q3UHD9"/>
<dbReference type="STRING" id="10090.ENSMUSP00000043466"/>
<dbReference type="GlyGen" id="Q3UHD9">
    <property type="glycosylation" value="4 sites, 1 O-linked glycan (3 sites)"/>
</dbReference>
<dbReference type="iPTMnet" id="Q3UHD9"/>
<dbReference type="PhosphoSitePlus" id="Q3UHD9"/>
<dbReference type="SwissPalm" id="Q3UHD9"/>
<dbReference type="jPOST" id="Q3UHD9"/>
<dbReference type="PaxDb" id="10090-ENSMUSP00000043466"/>
<dbReference type="PeptideAtlas" id="Q3UHD9"/>
<dbReference type="ProteomicsDB" id="296078">
    <molecule id="Q3UHD9-1"/>
</dbReference>
<dbReference type="ProteomicsDB" id="296079">
    <molecule id="Q3UHD9-2"/>
</dbReference>
<dbReference type="Antibodypedia" id="16354">
    <property type="antibodies" value="294 antibodies from 33 providers"/>
</dbReference>
<dbReference type="DNASU" id="216439"/>
<dbReference type="Ensembl" id="ENSMUST00000039259.7">
    <molecule id="Q3UHD9-1"/>
    <property type="protein sequence ID" value="ENSMUSP00000043466.7"/>
    <property type="gene ID" value="ENSMUSG00000025422.11"/>
</dbReference>
<dbReference type="Ensembl" id="ENSMUST00000217941.2">
    <molecule id="Q3UHD9-2"/>
    <property type="protein sequence ID" value="ENSMUSP00000151946.2"/>
    <property type="gene ID" value="ENSMUSG00000025422.11"/>
</dbReference>
<dbReference type="GeneID" id="216439"/>
<dbReference type="KEGG" id="mmu:216439"/>
<dbReference type="UCSC" id="uc007hhx.2">
    <molecule id="Q3UHD9-1"/>
    <property type="organism name" value="mouse"/>
</dbReference>
<dbReference type="UCSC" id="uc007hhy.2">
    <molecule id="Q3UHD9-2"/>
    <property type="organism name" value="mouse"/>
</dbReference>
<dbReference type="AGR" id="MGI:3580016"/>
<dbReference type="CTD" id="116986"/>
<dbReference type="MGI" id="MGI:3580016">
    <property type="gene designation" value="Agap2"/>
</dbReference>
<dbReference type="VEuPathDB" id="HostDB:ENSMUSG00000025422"/>
<dbReference type="eggNOG" id="KOG0705">
    <property type="taxonomic scope" value="Eukaryota"/>
</dbReference>
<dbReference type="GeneTree" id="ENSGT00940000158956"/>
<dbReference type="HOGENOM" id="CLU_007326_3_0_1"/>
<dbReference type="InParanoid" id="Q3UHD9"/>
<dbReference type="OMA" id="PAKRKMW"/>
<dbReference type="OrthoDB" id="6136903at2759"/>
<dbReference type="PhylomeDB" id="Q3UHD9"/>
<dbReference type="TreeFam" id="TF317762"/>
<dbReference type="BioGRID-ORCS" id="216439">
    <property type="hits" value="5 hits in 82 CRISPR screens"/>
</dbReference>
<dbReference type="CD-CODE" id="CE726F99">
    <property type="entry name" value="Postsynaptic density"/>
</dbReference>
<dbReference type="PRO" id="PR:Q3UHD9"/>
<dbReference type="Proteomes" id="UP000000589">
    <property type="component" value="Chromosome 10"/>
</dbReference>
<dbReference type="RNAct" id="Q3UHD9">
    <property type="molecule type" value="protein"/>
</dbReference>
<dbReference type="Bgee" id="ENSMUSG00000025422">
    <property type="expression patterns" value="Expressed in striatum and 53 other cell types or tissues"/>
</dbReference>
<dbReference type="ExpressionAtlas" id="Q3UHD9">
    <property type="expression patterns" value="baseline and differential"/>
</dbReference>
<dbReference type="GO" id="GO:0005737">
    <property type="term" value="C:cytoplasm"/>
    <property type="evidence" value="ECO:0000266"/>
    <property type="project" value="MGI"/>
</dbReference>
<dbReference type="GO" id="GO:0005829">
    <property type="term" value="C:cytosol"/>
    <property type="evidence" value="ECO:0007669"/>
    <property type="project" value="Ensembl"/>
</dbReference>
<dbReference type="GO" id="GO:0030425">
    <property type="term" value="C:dendrite"/>
    <property type="evidence" value="ECO:0007669"/>
    <property type="project" value="Ensembl"/>
</dbReference>
<dbReference type="GO" id="GO:0005768">
    <property type="term" value="C:endosome"/>
    <property type="evidence" value="ECO:0000266"/>
    <property type="project" value="MGI"/>
</dbReference>
<dbReference type="GO" id="GO:0009897">
    <property type="term" value="C:external side of plasma membrane"/>
    <property type="evidence" value="ECO:0007669"/>
    <property type="project" value="Ensembl"/>
</dbReference>
<dbReference type="GO" id="GO:0090543">
    <property type="term" value="C:Flemming body"/>
    <property type="evidence" value="ECO:0007669"/>
    <property type="project" value="Ensembl"/>
</dbReference>
<dbReference type="GO" id="GO:0098978">
    <property type="term" value="C:glutamatergic synapse"/>
    <property type="evidence" value="ECO:0000314"/>
    <property type="project" value="SynGO"/>
</dbReference>
<dbReference type="GO" id="GO:0005654">
    <property type="term" value="C:nucleoplasm"/>
    <property type="evidence" value="ECO:0007669"/>
    <property type="project" value="Ensembl"/>
</dbReference>
<dbReference type="GO" id="GO:0005634">
    <property type="term" value="C:nucleus"/>
    <property type="evidence" value="ECO:0000266"/>
    <property type="project" value="MGI"/>
</dbReference>
<dbReference type="GO" id="GO:0098794">
    <property type="term" value="C:postsynapse"/>
    <property type="evidence" value="ECO:0000314"/>
    <property type="project" value="SynGO"/>
</dbReference>
<dbReference type="GO" id="GO:0005524">
    <property type="term" value="F:ATP binding"/>
    <property type="evidence" value="ECO:0000266"/>
    <property type="project" value="MGI"/>
</dbReference>
<dbReference type="GO" id="GO:0005525">
    <property type="term" value="F:GTP binding"/>
    <property type="evidence" value="ECO:0000266"/>
    <property type="project" value="MGI"/>
</dbReference>
<dbReference type="GO" id="GO:0005096">
    <property type="term" value="F:GTPase activator activity"/>
    <property type="evidence" value="ECO:0000266"/>
    <property type="project" value="MGI"/>
</dbReference>
<dbReference type="GO" id="GO:0003924">
    <property type="term" value="F:GTPase activity"/>
    <property type="evidence" value="ECO:0000266"/>
    <property type="project" value="MGI"/>
</dbReference>
<dbReference type="GO" id="GO:0035255">
    <property type="term" value="F:ionotropic glutamate receptor binding"/>
    <property type="evidence" value="ECO:0007669"/>
    <property type="project" value="Ensembl"/>
</dbReference>
<dbReference type="GO" id="GO:0035014">
    <property type="term" value="F:phosphatidylinositol 3-kinase regulator activity"/>
    <property type="evidence" value="ECO:0000266"/>
    <property type="project" value="MGI"/>
</dbReference>
<dbReference type="GO" id="GO:0030295">
    <property type="term" value="F:protein kinase activator activity"/>
    <property type="evidence" value="ECO:0000266"/>
    <property type="project" value="MGI"/>
</dbReference>
<dbReference type="GO" id="GO:0019901">
    <property type="term" value="F:protein kinase binding"/>
    <property type="evidence" value="ECO:0000266"/>
    <property type="project" value="MGI"/>
</dbReference>
<dbReference type="GO" id="GO:0044877">
    <property type="term" value="F:protein-containing complex binding"/>
    <property type="evidence" value="ECO:0007669"/>
    <property type="project" value="Ensembl"/>
</dbReference>
<dbReference type="GO" id="GO:0008270">
    <property type="term" value="F:zinc ion binding"/>
    <property type="evidence" value="ECO:0007669"/>
    <property type="project" value="UniProtKB-KW"/>
</dbReference>
<dbReference type="GO" id="GO:0030036">
    <property type="term" value="P:actin cytoskeleton organization"/>
    <property type="evidence" value="ECO:0000266"/>
    <property type="project" value="MGI"/>
</dbReference>
<dbReference type="GO" id="GO:0006915">
    <property type="term" value="P:apoptotic process"/>
    <property type="evidence" value="ECO:0000315"/>
    <property type="project" value="MGI"/>
</dbReference>
<dbReference type="GO" id="GO:0007259">
    <property type="term" value="P:cell surface receptor signaling pathway via JAK-STAT"/>
    <property type="evidence" value="ECO:0000315"/>
    <property type="project" value="MGI"/>
</dbReference>
<dbReference type="GO" id="GO:1905430">
    <property type="term" value="P:cellular response to glycine"/>
    <property type="evidence" value="ECO:0007669"/>
    <property type="project" value="Ensembl"/>
</dbReference>
<dbReference type="GO" id="GO:0016197">
    <property type="term" value="P:endosomal transport"/>
    <property type="evidence" value="ECO:0000266"/>
    <property type="project" value="MGI"/>
</dbReference>
<dbReference type="GO" id="GO:1904019">
    <property type="term" value="P:epithelial cell apoptotic process"/>
    <property type="evidence" value="ECO:0000315"/>
    <property type="project" value="MGI"/>
</dbReference>
<dbReference type="GO" id="GO:0060749">
    <property type="term" value="P:mammary gland alveolus development"/>
    <property type="evidence" value="ECO:0000315"/>
    <property type="project" value="MGI"/>
</dbReference>
<dbReference type="GO" id="GO:0033598">
    <property type="term" value="P:mammary gland epithelial cell proliferation"/>
    <property type="evidence" value="ECO:0000315"/>
    <property type="project" value="MGI"/>
</dbReference>
<dbReference type="GO" id="GO:0043066">
    <property type="term" value="P:negative regulation of apoptotic process"/>
    <property type="evidence" value="ECO:0000315"/>
    <property type="project" value="MGI"/>
</dbReference>
<dbReference type="GO" id="GO:1904036">
    <property type="term" value="P:negative regulation of epithelial cell apoptotic process"/>
    <property type="evidence" value="ECO:0000315"/>
    <property type="project" value="MGI"/>
</dbReference>
<dbReference type="GO" id="GO:2001240">
    <property type="term" value="P:negative regulation of extrinsic apoptotic signaling pathway in absence of ligand"/>
    <property type="evidence" value="ECO:0007669"/>
    <property type="project" value="Ensembl"/>
</dbReference>
<dbReference type="GO" id="GO:0043524">
    <property type="term" value="P:negative regulation of neuron apoptotic process"/>
    <property type="evidence" value="ECO:0000266"/>
    <property type="project" value="MGI"/>
</dbReference>
<dbReference type="GO" id="GO:0042177">
    <property type="term" value="P:negative regulation of protein catabolic process"/>
    <property type="evidence" value="ECO:0000266"/>
    <property type="project" value="MGI"/>
</dbReference>
<dbReference type="GO" id="GO:0046488">
    <property type="term" value="P:phosphatidylinositol metabolic process"/>
    <property type="evidence" value="ECO:0007669"/>
    <property type="project" value="Ensembl"/>
</dbReference>
<dbReference type="GO" id="GO:0033601">
    <property type="term" value="P:positive regulation of mammary gland epithelial cell proliferation"/>
    <property type="evidence" value="ECO:0000315"/>
    <property type="project" value="MGI"/>
</dbReference>
<dbReference type="GO" id="GO:0051897">
    <property type="term" value="P:positive regulation of phosphatidylinositol 3-kinase/protein kinase B signal transduction"/>
    <property type="evidence" value="ECO:0007669"/>
    <property type="project" value="Ensembl"/>
</dbReference>
<dbReference type="GO" id="GO:2000010">
    <property type="term" value="P:positive regulation of protein localization to cell surface"/>
    <property type="evidence" value="ECO:0007669"/>
    <property type="project" value="Ensembl"/>
</dbReference>
<dbReference type="GO" id="GO:0046427">
    <property type="term" value="P:positive regulation of receptor signaling pathway via JAK-STAT"/>
    <property type="evidence" value="ECO:0000315"/>
    <property type="project" value="MGI"/>
</dbReference>
<dbReference type="GO" id="GO:0045944">
    <property type="term" value="P:positive regulation of transcription by RNA polymerase II"/>
    <property type="evidence" value="ECO:0000315"/>
    <property type="project" value="MGI"/>
</dbReference>
<dbReference type="CDD" id="cd08836">
    <property type="entry name" value="ArfGap_AGAP"/>
    <property type="match status" value="1"/>
</dbReference>
<dbReference type="CDD" id="cd04103">
    <property type="entry name" value="Centaurin_gamma"/>
    <property type="match status" value="1"/>
</dbReference>
<dbReference type="CDD" id="cd01250">
    <property type="entry name" value="PH_AGAP"/>
    <property type="match status" value="1"/>
</dbReference>
<dbReference type="FunFam" id="1.10.220.150:FF:000001">
    <property type="entry name" value="Arf-GAP with GTPase, ANK repeat and PH domain-containing protein 1"/>
    <property type="match status" value="1"/>
</dbReference>
<dbReference type="FunFam" id="1.25.40.20:FF:000084">
    <property type="entry name" value="Arf-GAP with GTPase, ANK repeat and PH domain-containing protein 2"/>
    <property type="match status" value="1"/>
</dbReference>
<dbReference type="FunFam" id="2.30.29.30:FF:000211">
    <property type="entry name" value="Arf-GAP with GTPase, ANK repeat and PH domain-containing protein 2"/>
    <property type="match status" value="1"/>
</dbReference>
<dbReference type="FunFam" id="3.40.50.300:FF:000545">
    <property type="entry name" value="arf-GAP with GTPase, ANK repeat and PH domain-containing protein 2"/>
    <property type="match status" value="1"/>
</dbReference>
<dbReference type="FunFam" id="2.30.29.30:FF:000239">
    <property type="entry name" value="arf-GAP with GTPase, ANK repeat and PH domain-containing protein 2 isoform X2"/>
    <property type="match status" value="1"/>
</dbReference>
<dbReference type="Gene3D" id="1.25.40.20">
    <property type="entry name" value="Ankyrin repeat-containing domain"/>
    <property type="match status" value="1"/>
</dbReference>
<dbReference type="Gene3D" id="1.10.220.150">
    <property type="entry name" value="Arf GTPase activating protein"/>
    <property type="match status" value="1"/>
</dbReference>
<dbReference type="Gene3D" id="3.40.50.300">
    <property type="entry name" value="P-loop containing nucleotide triphosphate hydrolases"/>
    <property type="match status" value="1"/>
</dbReference>
<dbReference type="Gene3D" id="2.30.29.30">
    <property type="entry name" value="Pleckstrin-homology domain (PH domain)/Phosphotyrosine-binding domain (PTB)"/>
    <property type="match status" value="2"/>
</dbReference>
<dbReference type="InterPro" id="IPR002110">
    <property type="entry name" value="Ankyrin_rpt"/>
</dbReference>
<dbReference type="InterPro" id="IPR036770">
    <property type="entry name" value="Ankyrin_rpt-contain_sf"/>
</dbReference>
<dbReference type="InterPro" id="IPR051282">
    <property type="entry name" value="Arf-GAP_GTPase_ANK_PH"/>
</dbReference>
<dbReference type="InterPro" id="IPR037278">
    <property type="entry name" value="ARFGAP/RecO"/>
</dbReference>
<dbReference type="InterPro" id="IPR001164">
    <property type="entry name" value="ArfGAP_dom"/>
</dbReference>
<dbReference type="InterPro" id="IPR038508">
    <property type="entry name" value="ArfGAP_dom_sf"/>
</dbReference>
<dbReference type="InterPro" id="IPR027417">
    <property type="entry name" value="P-loop_NTPase"/>
</dbReference>
<dbReference type="InterPro" id="IPR011993">
    <property type="entry name" value="PH-like_dom_sf"/>
</dbReference>
<dbReference type="InterPro" id="IPR001849">
    <property type="entry name" value="PH_domain"/>
</dbReference>
<dbReference type="InterPro" id="IPR001806">
    <property type="entry name" value="Small_GTPase"/>
</dbReference>
<dbReference type="PANTHER" id="PTHR45819:SF3">
    <property type="entry name" value="ARF-GAP WITH GTPASE, ANK REPEAT AND PH DOMAIN-CONTAINING PROTEIN 2"/>
    <property type="match status" value="1"/>
</dbReference>
<dbReference type="PANTHER" id="PTHR45819">
    <property type="entry name" value="CENTAURIN-GAMMA-1A"/>
    <property type="match status" value="1"/>
</dbReference>
<dbReference type="Pfam" id="PF12796">
    <property type="entry name" value="Ank_2"/>
    <property type="match status" value="1"/>
</dbReference>
<dbReference type="Pfam" id="PF01412">
    <property type="entry name" value="ArfGap"/>
    <property type="match status" value="1"/>
</dbReference>
<dbReference type="Pfam" id="PF00071">
    <property type="entry name" value="Ras"/>
    <property type="match status" value="1"/>
</dbReference>
<dbReference type="PRINTS" id="PR00405">
    <property type="entry name" value="REVINTRACTNG"/>
</dbReference>
<dbReference type="SMART" id="SM00105">
    <property type="entry name" value="ArfGap"/>
    <property type="match status" value="1"/>
</dbReference>
<dbReference type="SMART" id="SM00233">
    <property type="entry name" value="PH"/>
    <property type="match status" value="1"/>
</dbReference>
<dbReference type="SMART" id="SM00175">
    <property type="entry name" value="RAB"/>
    <property type="match status" value="1"/>
</dbReference>
<dbReference type="SMART" id="SM00173">
    <property type="entry name" value="RAS"/>
    <property type="match status" value="1"/>
</dbReference>
<dbReference type="SUPFAM" id="SSF48403">
    <property type="entry name" value="Ankyrin repeat"/>
    <property type="match status" value="1"/>
</dbReference>
<dbReference type="SUPFAM" id="SSF57863">
    <property type="entry name" value="ArfGap/RecO-like zinc finger"/>
    <property type="match status" value="1"/>
</dbReference>
<dbReference type="SUPFAM" id="SSF52540">
    <property type="entry name" value="P-loop containing nucleoside triphosphate hydrolases"/>
    <property type="match status" value="1"/>
</dbReference>
<dbReference type="SUPFAM" id="SSF50729">
    <property type="entry name" value="PH domain-like"/>
    <property type="match status" value="1"/>
</dbReference>
<dbReference type="PROSITE" id="PS50297">
    <property type="entry name" value="ANK_REP_REGION"/>
    <property type="match status" value="1"/>
</dbReference>
<dbReference type="PROSITE" id="PS50088">
    <property type="entry name" value="ANK_REPEAT"/>
    <property type="match status" value="1"/>
</dbReference>
<dbReference type="PROSITE" id="PS50115">
    <property type="entry name" value="ARFGAP"/>
    <property type="match status" value="1"/>
</dbReference>
<dbReference type="PROSITE" id="PS52057">
    <property type="entry name" value="GLD"/>
    <property type="match status" value="1"/>
</dbReference>
<dbReference type="PROSITE" id="PS50003">
    <property type="entry name" value="PH_DOMAIN"/>
    <property type="match status" value="1"/>
</dbReference>
<organism>
    <name type="scientific">Mus musculus</name>
    <name type="common">Mouse</name>
    <dbReference type="NCBI Taxonomy" id="10090"/>
    <lineage>
        <taxon>Eukaryota</taxon>
        <taxon>Metazoa</taxon>
        <taxon>Chordata</taxon>
        <taxon>Craniata</taxon>
        <taxon>Vertebrata</taxon>
        <taxon>Euteleostomi</taxon>
        <taxon>Mammalia</taxon>
        <taxon>Eutheria</taxon>
        <taxon>Euarchontoglires</taxon>
        <taxon>Glires</taxon>
        <taxon>Rodentia</taxon>
        <taxon>Myomorpha</taxon>
        <taxon>Muroidea</taxon>
        <taxon>Muridae</taxon>
        <taxon>Murinae</taxon>
        <taxon>Mus</taxon>
        <taxon>Mus</taxon>
    </lineage>
</organism>
<gene>
    <name type="primary">Agap2</name>
    <name type="synonym">Centg1</name>
    <name type="synonym">Kiaa0167</name>
</gene>
<protein>
    <recommendedName>
        <fullName>Arf-GAP with GTPase, ANK repeat and PH domain-containing protein 2</fullName>
        <shortName>AGAP-2</shortName>
    </recommendedName>
    <alternativeName>
        <fullName>Centaurin-gamma-1</fullName>
        <shortName>Cnt-g1</shortName>
    </alternativeName>
    <alternativeName>
        <fullName>Phosphatidylinositol 3-kinase enhancer</fullName>
        <shortName>PIKE</shortName>
    </alternativeName>
</protein>
<feature type="chain" id="PRO_0000235913" description="Arf-GAP with GTPase, ANK repeat and PH domain-containing protein 2">
    <location>
        <begin position="1"/>
        <end position="1186"/>
    </location>
</feature>
<feature type="domain" description="GLD" evidence="6">
    <location>
        <begin position="396"/>
        <end position="572"/>
    </location>
</feature>
<feature type="domain" description="PH" evidence="4">
    <location>
        <begin position="670"/>
        <end position="904"/>
    </location>
</feature>
<feature type="domain" description="Arf-GAP" evidence="5">
    <location>
        <begin position="925"/>
        <end position="1045"/>
    </location>
</feature>
<feature type="repeat" description="ANK 1">
    <location>
        <begin position="1084"/>
        <end position="1113"/>
    </location>
</feature>
<feature type="repeat" description="ANK 2">
    <location>
        <begin position="1117"/>
        <end position="1146"/>
    </location>
</feature>
<feature type="zinc finger region" description="C4-type" evidence="5">
    <location>
        <begin position="940"/>
        <end position="963"/>
    </location>
</feature>
<feature type="region of interest" description="Interaction with EPB41L1" evidence="1">
    <location>
        <begin position="1"/>
        <end position="23"/>
    </location>
</feature>
<feature type="region of interest" description="Disordered" evidence="7">
    <location>
        <begin position="24"/>
        <end position="380"/>
    </location>
</feature>
<feature type="region of interest" description="Interactions with HOMER1 and NF2" evidence="1">
    <location>
        <begin position="180"/>
        <end position="225"/>
    </location>
</feature>
<feature type="region of interest" description="Interaction with PLCG1" evidence="1">
    <location>
        <begin position="262"/>
        <end position="384"/>
    </location>
</feature>
<feature type="region of interest" description="G domain">
    <location>
        <begin position="399"/>
        <end position="566"/>
    </location>
</feature>
<feature type="region of interest" description="Disordered" evidence="7">
    <location>
        <begin position="576"/>
        <end position="613"/>
    </location>
</feature>
<feature type="region of interest" description="Disordered" evidence="7">
    <location>
        <begin position="628"/>
        <end position="667"/>
    </location>
</feature>
<feature type="region of interest" description="Disordered" evidence="7">
    <location>
        <begin position="759"/>
        <end position="784"/>
    </location>
</feature>
<feature type="region of interest" description="Disordered" evidence="7">
    <location>
        <begin position="800"/>
        <end position="844"/>
    </location>
</feature>
<feature type="region of interest" description="Disordered" evidence="7">
    <location>
        <begin position="1145"/>
        <end position="1174"/>
    </location>
</feature>
<feature type="compositionally biased region" description="Low complexity" evidence="7">
    <location>
        <begin position="35"/>
        <end position="44"/>
    </location>
</feature>
<feature type="compositionally biased region" description="Basic and acidic residues" evidence="7">
    <location>
        <begin position="47"/>
        <end position="62"/>
    </location>
</feature>
<feature type="compositionally biased region" description="Pro residues" evidence="7">
    <location>
        <begin position="92"/>
        <end position="106"/>
    </location>
</feature>
<feature type="compositionally biased region" description="Low complexity" evidence="7">
    <location>
        <begin position="107"/>
        <end position="117"/>
    </location>
</feature>
<feature type="compositionally biased region" description="Low complexity" evidence="7">
    <location>
        <begin position="124"/>
        <end position="153"/>
    </location>
</feature>
<feature type="compositionally biased region" description="Low complexity" evidence="7">
    <location>
        <begin position="165"/>
        <end position="175"/>
    </location>
</feature>
<feature type="compositionally biased region" description="Low complexity" evidence="7">
    <location>
        <begin position="189"/>
        <end position="198"/>
    </location>
</feature>
<feature type="compositionally biased region" description="Low complexity" evidence="7">
    <location>
        <begin position="224"/>
        <end position="236"/>
    </location>
</feature>
<feature type="compositionally biased region" description="Pro residues" evidence="7">
    <location>
        <begin position="308"/>
        <end position="320"/>
    </location>
</feature>
<feature type="compositionally biased region" description="Basic and acidic residues" evidence="7">
    <location>
        <begin position="324"/>
        <end position="338"/>
    </location>
</feature>
<feature type="compositionally biased region" description="Low complexity" evidence="7">
    <location>
        <begin position="362"/>
        <end position="376"/>
    </location>
</feature>
<feature type="compositionally biased region" description="Low complexity" evidence="7">
    <location>
        <begin position="576"/>
        <end position="590"/>
    </location>
</feature>
<feature type="compositionally biased region" description="Low complexity" evidence="7">
    <location>
        <begin position="600"/>
        <end position="609"/>
    </location>
</feature>
<feature type="compositionally biased region" description="Basic and acidic residues" evidence="7">
    <location>
        <begin position="648"/>
        <end position="661"/>
    </location>
</feature>
<feature type="compositionally biased region" description="Low complexity" evidence="7">
    <location>
        <begin position="1148"/>
        <end position="1166"/>
    </location>
</feature>
<feature type="binding site" evidence="3">
    <location>
        <begin position="407"/>
        <end position="414"/>
    </location>
    <ligand>
        <name>GTP</name>
        <dbReference type="ChEBI" id="CHEBI:37565"/>
    </ligand>
</feature>
<feature type="binding site" evidence="3">
    <location>
        <begin position="451"/>
        <end position="455"/>
    </location>
    <ligand>
        <name>GTP</name>
        <dbReference type="ChEBI" id="CHEBI:37565"/>
    </ligand>
</feature>
<feature type="binding site" evidence="3">
    <location>
        <begin position="509"/>
        <end position="512"/>
    </location>
    <ligand>
        <name>GTP</name>
        <dbReference type="ChEBI" id="CHEBI:37565"/>
    </ligand>
</feature>
<feature type="modified residue" description="Phosphoserine" evidence="10">
    <location>
        <position position="113"/>
    </location>
</feature>
<feature type="modified residue" description="Phosphoserine" evidence="10">
    <location>
        <position position="128"/>
    </location>
</feature>
<feature type="modified residue" description="Phosphoserine" evidence="10">
    <location>
        <position position="149"/>
    </location>
</feature>
<feature type="modified residue" description="Phosphoserine" evidence="10">
    <location>
        <position position="632"/>
    </location>
</feature>
<feature type="modified residue" description="Phosphoserine" evidence="10">
    <location>
        <position position="744"/>
    </location>
</feature>
<feature type="modified residue" description="Phosphoserine" evidence="10">
    <location>
        <position position="746"/>
    </location>
</feature>
<feature type="modified residue" description="Phosphoserine" evidence="10">
    <location>
        <position position="802"/>
    </location>
</feature>
<feature type="modified residue" description="Phosphoserine" evidence="10">
    <location>
        <position position="921"/>
    </location>
</feature>
<feature type="modified residue" description="Phosphoserine" evidence="10">
    <location>
        <position position="979"/>
    </location>
</feature>
<feature type="modified residue" description="Phosphoserine" evidence="2">
    <location>
        <position position="1172"/>
    </location>
</feature>
<feature type="splice variant" id="VSP_018542" description="In isoform 2." evidence="8">
    <location>
        <begin position="847"/>
        <end position="866"/>
    </location>
</feature>
<feature type="sequence conflict" description="In Ref. 2; BAD90236." evidence="9" ref="2">
    <original>T</original>
    <variation>A</variation>
    <location>
        <position position="381"/>
    </location>
</feature>
<comment type="function">
    <text evidence="1">GTPase-activating protein (GAP) for ARF1 and ARF5, which also shows strong GTPase activity. Participates in the prevention of neuronal apoptosis by enhancing PI3 kinase activity. Aids the coupling of metabotropic glutamate receptor 1 (GRM1) to cytoplasmic PI3 kinase by interacting with Homer scaffolding proteins, and also seems to mediate anti-apoptotic effects of NGF by activating nuclear PI3 kinase (By similarity).</text>
</comment>
<comment type="activity regulation">
    <text evidence="1">GAP activity is stimulated by phosphatidylinositol 4,5-bisphosphate (PIP2) and, to a lesser extent, by phosphatidylinositol 3,4,5-trisphosphate (PIP3). Phosphatidic acid potentiates PIP2 stimulation (By similarity).</text>
</comment>
<comment type="subunit">
    <text evidence="1">Interacts with EPB41L1, PLCG1, NF2, HOMER1 and HOMER2.</text>
</comment>
<comment type="subcellular location">
    <subcellularLocation>
        <location>Cytoplasm</location>
    </subcellularLocation>
    <subcellularLocation>
        <location evidence="1">Nucleus</location>
    </subcellularLocation>
</comment>
<comment type="alternative products">
    <event type="alternative splicing"/>
    <isoform>
        <id>Q3UHD9-1</id>
        <name>1</name>
        <sequence type="displayed"/>
    </isoform>
    <isoform>
        <id>Q3UHD9-2</id>
        <name>2</name>
        <sequence type="described" ref="VSP_018542"/>
    </isoform>
</comment>
<comment type="domain">
    <text>G domain binds GTP and has GTPase activity.</text>
</comment>
<comment type="domain">
    <text>Arf-GAP domain interacts with G domain and may regulate its GTPase activity.</text>
</comment>
<comment type="domain">
    <text>PH domain binds phospholipids and is required for nuclear targeting.</text>
</comment>
<comment type="similarity">
    <text evidence="6 9">Belongs to the centaurin gamma-like family.</text>
</comment>
<proteinExistence type="evidence at protein level"/>
<keyword id="KW-0025">Alternative splicing</keyword>
<keyword id="KW-0040">ANK repeat</keyword>
<keyword id="KW-0963">Cytoplasm</keyword>
<keyword id="KW-0342">GTP-binding</keyword>
<keyword id="KW-0343">GTPase activation</keyword>
<keyword id="KW-0479">Metal-binding</keyword>
<keyword id="KW-0547">Nucleotide-binding</keyword>
<keyword id="KW-0539">Nucleus</keyword>
<keyword id="KW-0597">Phosphoprotein</keyword>
<keyword id="KW-1185">Reference proteome</keyword>
<keyword id="KW-0677">Repeat</keyword>
<keyword id="KW-0862">Zinc</keyword>
<keyword id="KW-0863">Zinc-finger</keyword>
<accession>Q3UHD9</accession>
<accession>Q5DU45</accession>
<reference key="1">
    <citation type="journal article" date="2005" name="Science">
        <title>The transcriptional landscape of the mammalian genome.</title>
        <authorList>
            <person name="Carninci P."/>
            <person name="Kasukawa T."/>
            <person name="Katayama S."/>
            <person name="Gough J."/>
            <person name="Frith M.C."/>
            <person name="Maeda N."/>
            <person name="Oyama R."/>
            <person name="Ravasi T."/>
            <person name="Lenhard B."/>
            <person name="Wells C."/>
            <person name="Kodzius R."/>
            <person name="Shimokawa K."/>
            <person name="Bajic V.B."/>
            <person name="Brenner S.E."/>
            <person name="Batalov S."/>
            <person name="Forrest A.R."/>
            <person name="Zavolan M."/>
            <person name="Davis M.J."/>
            <person name="Wilming L.G."/>
            <person name="Aidinis V."/>
            <person name="Allen J.E."/>
            <person name="Ambesi-Impiombato A."/>
            <person name="Apweiler R."/>
            <person name="Aturaliya R.N."/>
            <person name="Bailey T.L."/>
            <person name="Bansal M."/>
            <person name="Baxter L."/>
            <person name="Beisel K.W."/>
            <person name="Bersano T."/>
            <person name="Bono H."/>
            <person name="Chalk A.M."/>
            <person name="Chiu K.P."/>
            <person name="Choudhary V."/>
            <person name="Christoffels A."/>
            <person name="Clutterbuck D.R."/>
            <person name="Crowe M.L."/>
            <person name="Dalla E."/>
            <person name="Dalrymple B.P."/>
            <person name="de Bono B."/>
            <person name="Della Gatta G."/>
            <person name="di Bernardo D."/>
            <person name="Down T."/>
            <person name="Engstrom P."/>
            <person name="Fagiolini M."/>
            <person name="Faulkner G."/>
            <person name="Fletcher C.F."/>
            <person name="Fukushima T."/>
            <person name="Furuno M."/>
            <person name="Futaki S."/>
            <person name="Gariboldi M."/>
            <person name="Georgii-Hemming P."/>
            <person name="Gingeras T.R."/>
            <person name="Gojobori T."/>
            <person name="Green R.E."/>
            <person name="Gustincich S."/>
            <person name="Harbers M."/>
            <person name="Hayashi Y."/>
            <person name="Hensch T.K."/>
            <person name="Hirokawa N."/>
            <person name="Hill D."/>
            <person name="Huminiecki L."/>
            <person name="Iacono M."/>
            <person name="Ikeo K."/>
            <person name="Iwama A."/>
            <person name="Ishikawa T."/>
            <person name="Jakt M."/>
            <person name="Kanapin A."/>
            <person name="Katoh M."/>
            <person name="Kawasawa Y."/>
            <person name="Kelso J."/>
            <person name="Kitamura H."/>
            <person name="Kitano H."/>
            <person name="Kollias G."/>
            <person name="Krishnan S.P."/>
            <person name="Kruger A."/>
            <person name="Kummerfeld S.K."/>
            <person name="Kurochkin I.V."/>
            <person name="Lareau L.F."/>
            <person name="Lazarevic D."/>
            <person name="Lipovich L."/>
            <person name="Liu J."/>
            <person name="Liuni S."/>
            <person name="McWilliam S."/>
            <person name="Madan Babu M."/>
            <person name="Madera M."/>
            <person name="Marchionni L."/>
            <person name="Matsuda H."/>
            <person name="Matsuzawa S."/>
            <person name="Miki H."/>
            <person name="Mignone F."/>
            <person name="Miyake S."/>
            <person name="Morris K."/>
            <person name="Mottagui-Tabar S."/>
            <person name="Mulder N."/>
            <person name="Nakano N."/>
            <person name="Nakauchi H."/>
            <person name="Ng P."/>
            <person name="Nilsson R."/>
            <person name="Nishiguchi S."/>
            <person name="Nishikawa S."/>
            <person name="Nori F."/>
            <person name="Ohara O."/>
            <person name="Okazaki Y."/>
            <person name="Orlando V."/>
            <person name="Pang K.C."/>
            <person name="Pavan W.J."/>
            <person name="Pavesi G."/>
            <person name="Pesole G."/>
            <person name="Petrovsky N."/>
            <person name="Piazza S."/>
            <person name="Reed J."/>
            <person name="Reid J.F."/>
            <person name="Ring B.Z."/>
            <person name="Ringwald M."/>
            <person name="Rost B."/>
            <person name="Ruan Y."/>
            <person name="Salzberg S.L."/>
            <person name="Sandelin A."/>
            <person name="Schneider C."/>
            <person name="Schoenbach C."/>
            <person name="Sekiguchi K."/>
            <person name="Semple C.A."/>
            <person name="Seno S."/>
            <person name="Sessa L."/>
            <person name="Sheng Y."/>
            <person name="Shibata Y."/>
            <person name="Shimada H."/>
            <person name="Shimada K."/>
            <person name="Silva D."/>
            <person name="Sinclair B."/>
            <person name="Sperling S."/>
            <person name="Stupka E."/>
            <person name="Sugiura K."/>
            <person name="Sultana R."/>
            <person name="Takenaka Y."/>
            <person name="Taki K."/>
            <person name="Tammoja K."/>
            <person name="Tan S.L."/>
            <person name="Tang S."/>
            <person name="Taylor M.S."/>
            <person name="Tegner J."/>
            <person name="Teichmann S.A."/>
            <person name="Ueda H.R."/>
            <person name="van Nimwegen E."/>
            <person name="Verardo R."/>
            <person name="Wei C.L."/>
            <person name="Yagi K."/>
            <person name="Yamanishi H."/>
            <person name="Zabarovsky E."/>
            <person name="Zhu S."/>
            <person name="Zimmer A."/>
            <person name="Hide W."/>
            <person name="Bult C."/>
            <person name="Grimmond S.M."/>
            <person name="Teasdale R.D."/>
            <person name="Liu E.T."/>
            <person name="Brusic V."/>
            <person name="Quackenbush J."/>
            <person name="Wahlestedt C."/>
            <person name="Mattick J.S."/>
            <person name="Hume D.A."/>
            <person name="Kai C."/>
            <person name="Sasaki D."/>
            <person name="Tomaru Y."/>
            <person name="Fukuda S."/>
            <person name="Kanamori-Katayama M."/>
            <person name="Suzuki M."/>
            <person name="Aoki J."/>
            <person name="Arakawa T."/>
            <person name="Iida J."/>
            <person name="Imamura K."/>
            <person name="Itoh M."/>
            <person name="Kato T."/>
            <person name="Kawaji H."/>
            <person name="Kawagashira N."/>
            <person name="Kawashima T."/>
            <person name="Kojima M."/>
            <person name="Kondo S."/>
            <person name="Konno H."/>
            <person name="Nakano K."/>
            <person name="Ninomiya N."/>
            <person name="Nishio T."/>
            <person name="Okada M."/>
            <person name="Plessy C."/>
            <person name="Shibata K."/>
            <person name="Shiraki T."/>
            <person name="Suzuki S."/>
            <person name="Tagami M."/>
            <person name="Waki K."/>
            <person name="Watahiki A."/>
            <person name="Okamura-Oho Y."/>
            <person name="Suzuki H."/>
            <person name="Kawai J."/>
            <person name="Hayashizaki Y."/>
        </authorList>
    </citation>
    <scope>NUCLEOTIDE SEQUENCE [LARGE SCALE MRNA] (ISOFORM 1)</scope>
    <source>
        <strain>C57BL/6J</strain>
        <tissue>Brain</tissue>
    </source>
</reference>
<reference key="2">
    <citation type="submission" date="2005-02" db="EMBL/GenBank/DDBJ databases">
        <title>Prediction of the coding sequences of mouse homologues of KIAA gene. The complete nucleotide sequences of mouse KIAA-homologous cDNAs identified by screening of terminal sequences of cDNA clones randomly sampled from size-fractionated libraries.</title>
        <authorList>
            <person name="Okazaki N."/>
            <person name="Kikuno R.F."/>
            <person name="Ohara R."/>
            <person name="Inamoto S."/>
            <person name="Nagase T."/>
            <person name="Ohara O."/>
            <person name="Koga H."/>
        </authorList>
    </citation>
    <scope>NUCLEOTIDE SEQUENCE [LARGE SCALE MRNA] OF 138-1186 (ISOFORM 2)</scope>
    <source>
        <tissue>Fetal brain</tissue>
    </source>
</reference>
<reference key="3">
    <citation type="journal article" date="2010" name="Cell">
        <title>A tissue-specific atlas of mouse protein phosphorylation and expression.</title>
        <authorList>
            <person name="Huttlin E.L."/>
            <person name="Jedrychowski M.P."/>
            <person name="Elias J.E."/>
            <person name="Goswami T."/>
            <person name="Rad R."/>
            <person name="Beausoleil S.A."/>
            <person name="Villen J."/>
            <person name="Haas W."/>
            <person name="Sowa M.E."/>
            <person name="Gygi S.P."/>
        </authorList>
    </citation>
    <scope>PHOSPHORYLATION [LARGE SCALE ANALYSIS] AT SER-113; SER-128; SER-149; SER-632; SER-744; SER-746; SER-802; SER-921 AND SER-979</scope>
    <scope>IDENTIFICATION BY MASS SPECTROMETRY [LARGE SCALE ANALYSIS]</scope>
    <source>
        <tissue>Brain</tissue>
        <tissue>Brown adipose tissue</tissue>
        <tissue>Lung</tissue>
        <tissue>Spleen</tissue>
    </source>
</reference>